<protein>
    <recommendedName>
        <fullName>Ankyrin repeat, SAM and basic leucine zipper domain-containing protein 1</fullName>
    </recommendedName>
    <alternativeName>
        <fullName>Germ cell-specific ankyrin, SAM and basic leucine zipper domain-containing protein</fullName>
    </alternativeName>
</protein>
<keyword id="KW-0040">ANK repeat</keyword>
<keyword id="KW-0963">Cytoplasm</keyword>
<keyword id="KW-0217">Developmental protein</keyword>
<keyword id="KW-0221">Differentiation</keyword>
<keyword id="KW-0469">Meiosis</keyword>
<keyword id="KW-0597">Phosphoprotein</keyword>
<keyword id="KW-0677">Repeat</keyword>
<keyword id="KW-0943">RNA-mediated gene silencing</keyword>
<keyword id="KW-0744">Spermatogenesis</keyword>
<name>ASZ1_COLGU</name>
<comment type="function">
    <text evidence="1">Plays a central role during spermatogenesis by repressing transposable elements and preventing their mobilization, which is essential for the germline integrity. Acts via the piRNA metabolic process, which mediates the repression of transposable elements during meiosis by forming complexes composed of piRNAs and Piwi proteins and governs the methylation and subsequent repression of transposons. Its association with pi-bodies suggests a participation in the primary piRNAs metabolic process. Required prior to the pachytene stage to facilitate the production of multiple types of piRNAs, including those associated with repeats involved in the regulation of retrotransposons. May act by mediating protein-protein interactions during germ cell maturation (By similarity).</text>
</comment>
<comment type="subunit">
    <text evidence="1">Interacts with DDX4, PIWIL1, RANBP9 and TDRD1.</text>
</comment>
<comment type="subcellular location">
    <subcellularLocation>
        <location evidence="1">Cytoplasm</location>
    </subcellularLocation>
    <text evidence="1">Component of the meiotic nuage, also named P granule, a germ-cell-specific organelle required to repress transposon activity during meiosis. Specifically localizes to pi-bodies, a subset of the nuage which contains primary piRNAs (By similarity).</text>
</comment>
<organism>
    <name type="scientific">Colobus guereza</name>
    <name type="common">Mantled guereza</name>
    <name type="synonym">Eastern black-and-white colobus monkey</name>
    <dbReference type="NCBI Taxonomy" id="33548"/>
    <lineage>
        <taxon>Eukaryota</taxon>
        <taxon>Metazoa</taxon>
        <taxon>Chordata</taxon>
        <taxon>Craniata</taxon>
        <taxon>Vertebrata</taxon>
        <taxon>Euteleostomi</taxon>
        <taxon>Mammalia</taxon>
        <taxon>Eutheria</taxon>
        <taxon>Euarchontoglires</taxon>
        <taxon>Primates</taxon>
        <taxon>Haplorrhini</taxon>
        <taxon>Catarrhini</taxon>
        <taxon>Cercopithecidae</taxon>
        <taxon>Colobinae</taxon>
        <taxon>Colobus</taxon>
    </lineage>
</organism>
<sequence>MAAGALRGLPVAGGGESSESEDDCWEIGYLDRTSQKLKGLLPIEEKKEKFKKAMTIGDVSLIQELLDSGISVDSTFQYGWTPLMYAASVANAELVRVLLDSGANASFEKDKQTILITACSARGSEEQILKCVELLLSRNADPNVACRRLMTPIMYAARDGHTQVVALLVAHGAEVNTQDENGYTALTWAARQGHKNIVLKLLELGANKMLQTKDGKMPSEIAKRNKHHEIFNLLSFTLNPLEGKLQQLTKEDTICKILTTDSDREKDHIFSSYTAFGDLEVFLHGIGLEHLTDLLKERDITLRHLLTMREDEFTKNGITSEDQQKILATLKELQVEEIQFGELSEEIKLEISGDEFLNFLLKLNKQCGHLITAVQNIITELPVNSQKITLEWASPRNFTSVCEELVNNVEDLSEEVCKLKDVIQKLQNERENDPTHIQLREEVSTWNSRILKRTAITVCGFGFLLFICKLTFQRK</sequence>
<dbReference type="EMBL" id="DP000193">
    <property type="protein sequence ID" value="ABJ08856.1"/>
    <property type="molecule type" value="Genomic_DNA"/>
</dbReference>
<dbReference type="SMR" id="Q07DY6"/>
<dbReference type="GO" id="GO:0071546">
    <property type="term" value="C:pi-body"/>
    <property type="evidence" value="ECO:0000250"/>
    <property type="project" value="UniProtKB"/>
</dbReference>
<dbReference type="GO" id="GO:0030154">
    <property type="term" value="P:cell differentiation"/>
    <property type="evidence" value="ECO:0007669"/>
    <property type="project" value="UniProtKB-KW"/>
</dbReference>
<dbReference type="GO" id="GO:0007140">
    <property type="term" value="P:male meiotic nuclear division"/>
    <property type="evidence" value="ECO:0000250"/>
    <property type="project" value="UniProtKB"/>
</dbReference>
<dbReference type="GO" id="GO:0031047">
    <property type="term" value="P:regulatory ncRNA-mediated gene silencing"/>
    <property type="evidence" value="ECO:0007669"/>
    <property type="project" value="UniProtKB-KW"/>
</dbReference>
<dbReference type="GO" id="GO:0007283">
    <property type="term" value="P:spermatogenesis"/>
    <property type="evidence" value="ECO:0000250"/>
    <property type="project" value="UniProtKB"/>
</dbReference>
<dbReference type="GO" id="GO:0010526">
    <property type="term" value="P:transposable element silencing"/>
    <property type="evidence" value="ECO:0000250"/>
    <property type="project" value="UniProtKB"/>
</dbReference>
<dbReference type="CDD" id="cd09521">
    <property type="entry name" value="SAM_ASZ1"/>
    <property type="match status" value="1"/>
</dbReference>
<dbReference type="FunFam" id="1.25.40.20:FF:000192">
    <property type="entry name" value="Ankyrin repeat, SAM and basic leucine zipper domain-containing 1"/>
    <property type="match status" value="1"/>
</dbReference>
<dbReference type="FunFam" id="1.10.150.50:FF:000060">
    <property type="entry name" value="Ankyrin repeat, SAM and basic leucine zipper domain-containing protein 1"/>
    <property type="match status" value="1"/>
</dbReference>
<dbReference type="Gene3D" id="1.25.40.20">
    <property type="entry name" value="Ankyrin repeat-containing domain"/>
    <property type="match status" value="2"/>
</dbReference>
<dbReference type="Gene3D" id="1.10.150.50">
    <property type="entry name" value="Transcription Factor, Ets-1"/>
    <property type="match status" value="1"/>
</dbReference>
<dbReference type="InterPro" id="IPR002110">
    <property type="entry name" value="Ankyrin_rpt"/>
</dbReference>
<dbReference type="InterPro" id="IPR036770">
    <property type="entry name" value="Ankyrin_rpt-contain_sf"/>
</dbReference>
<dbReference type="InterPro" id="IPR042650">
    <property type="entry name" value="Asz1_SAM"/>
</dbReference>
<dbReference type="InterPro" id="IPR001660">
    <property type="entry name" value="SAM"/>
</dbReference>
<dbReference type="InterPro" id="IPR013761">
    <property type="entry name" value="SAM/pointed_sf"/>
</dbReference>
<dbReference type="PANTHER" id="PTHR24157">
    <property type="entry name" value="ANKYRIN REPEAT, SAM AND BASIC LEUCINE ZIPPER DOMAIN-CONTAINING PROTEIN 1"/>
    <property type="match status" value="1"/>
</dbReference>
<dbReference type="PANTHER" id="PTHR24157:SF3">
    <property type="entry name" value="ANKYRIN REPEAT, SAM AND BASIC LEUCINE ZIPPER DOMAIN-CONTAINING PROTEIN 1"/>
    <property type="match status" value="1"/>
</dbReference>
<dbReference type="Pfam" id="PF00023">
    <property type="entry name" value="Ank"/>
    <property type="match status" value="1"/>
</dbReference>
<dbReference type="Pfam" id="PF12796">
    <property type="entry name" value="Ank_2"/>
    <property type="match status" value="1"/>
</dbReference>
<dbReference type="Pfam" id="PF07647">
    <property type="entry name" value="SAM_2"/>
    <property type="match status" value="1"/>
</dbReference>
<dbReference type="PRINTS" id="PR01415">
    <property type="entry name" value="ANKYRIN"/>
</dbReference>
<dbReference type="SMART" id="SM00248">
    <property type="entry name" value="ANK"/>
    <property type="match status" value="5"/>
</dbReference>
<dbReference type="SUPFAM" id="SSF48403">
    <property type="entry name" value="Ankyrin repeat"/>
    <property type="match status" value="1"/>
</dbReference>
<dbReference type="SUPFAM" id="SSF140860">
    <property type="entry name" value="Pseudo ankyrin repeat-like"/>
    <property type="match status" value="1"/>
</dbReference>
<dbReference type="SUPFAM" id="SSF47769">
    <property type="entry name" value="SAM/Pointed domain"/>
    <property type="match status" value="1"/>
</dbReference>
<dbReference type="PROSITE" id="PS50297">
    <property type="entry name" value="ANK_REP_REGION"/>
    <property type="match status" value="1"/>
</dbReference>
<dbReference type="PROSITE" id="PS50088">
    <property type="entry name" value="ANK_REPEAT"/>
    <property type="match status" value="3"/>
</dbReference>
<gene>
    <name type="primary">ASZ1</name>
    <name type="synonym">GASZ</name>
</gene>
<proteinExistence type="inferred from homology"/>
<evidence type="ECO:0000250" key="1"/>
<evidence type="ECO:0000250" key="2">
    <source>
        <dbReference type="UniProtKB" id="Q8VD46"/>
    </source>
</evidence>
<evidence type="ECO:0000256" key="3">
    <source>
        <dbReference type="SAM" id="MobiDB-lite"/>
    </source>
</evidence>
<feature type="chain" id="PRO_0000260388" description="Ankyrin repeat, SAM and basic leucine zipper domain-containing protein 1">
    <location>
        <begin position="1"/>
        <end position="475"/>
    </location>
</feature>
<feature type="repeat" description="ANK 1">
    <location>
        <begin position="45"/>
        <end position="74"/>
    </location>
</feature>
<feature type="repeat" description="ANK 2">
    <location>
        <begin position="78"/>
        <end position="107"/>
    </location>
</feature>
<feature type="repeat" description="ANK 3">
    <location>
        <begin position="110"/>
        <end position="144"/>
    </location>
</feature>
<feature type="repeat" description="ANK 4">
    <location>
        <begin position="148"/>
        <end position="177"/>
    </location>
</feature>
<feature type="repeat" description="ANK 5">
    <location>
        <begin position="181"/>
        <end position="210"/>
    </location>
</feature>
<feature type="repeat" description="ANK 6">
    <location>
        <begin position="214"/>
        <end position="243"/>
    </location>
</feature>
<feature type="domain" description="SAM">
    <location>
        <begin position="272"/>
        <end position="334"/>
    </location>
</feature>
<feature type="region of interest" description="Disordered" evidence="3">
    <location>
        <begin position="1"/>
        <end position="22"/>
    </location>
</feature>
<feature type="modified residue" description="Phosphoserine" evidence="2">
    <location>
        <position position="17"/>
    </location>
</feature>
<feature type="modified residue" description="Phosphoserine" evidence="2">
    <location>
        <position position="18"/>
    </location>
</feature>
<feature type="modified residue" description="Phosphoserine" evidence="2">
    <location>
        <position position="20"/>
    </location>
</feature>
<accession>Q07DY6</accession>
<reference key="1">
    <citation type="submission" date="2006-09" db="EMBL/GenBank/DDBJ databases">
        <title>NISC comparative sequencing initiative.</title>
        <authorList>
            <person name="Antonellis A."/>
            <person name="Ayele K."/>
            <person name="Benjamin B."/>
            <person name="Blakesley R.W."/>
            <person name="Boakye A."/>
            <person name="Bouffard G.G."/>
            <person name="Brinkley C."/>
            <person name="Brooks S."/>
            <person name="Chu G."/>
            <person name="Coleman H."/>
            <person name="Engle J."/>
            <person name="Gestole M."/>
            <person name="Greene A."/>
            <person name="Guan X."/>
            <person name="Gupta J."/>
            <person name="Haghighi P."/>
            <person name="Han J."/>
            <person name="Hansen N."/>
            <person name="Ho S.-L."/>
            <person name="Hu P."/>
            <person name="Hunter G."/>
            <person name="Hurle B."/>
            <person name="Idol J.R."/>
            <person name="Kwong P."/>
            <person name="Laric P."/>
            <person name="Larson S."/>
            <person name="Lee-Lin S.-Q."/>
            <person name="Legaspi R."/>
            <person name="Madden M."/>
            <person name="Maduro Q.L."/>
            <person name="Maduro V.B."/>
            <person name="Margulies E.H."/>
            <person name="Masiello C."/>
            <person name="Maskeri B."/>
            <person name="McDowell J."/>
            <person name="Mojidi H.A."/>
            <person name="Mullikin J.C."/>
            <person name="Oestreicher J.S."/>
            <person name="Park M."/>
            <person name="Portnoy M.E."/>
            <person name="Prasad A."/>
            <person name="Puri O."/>
            <person name="Reddix-Dugue N."/>
            <person name="Schandler K."/>
            <person name="Schueler M.G."/>
            <person name="Sison C."/>
            <person name="Stantripop S."/>
            <person name="Stephen E."/>
            <person name="Taye A."/>
            <person name="Thomas J.W."/>
            <person name="Thomas P.J."/>
            <person name="Tsipouri V."/>
            <person name="Ung L."/>
            <person name="Vogt J.L."/>
            <person name="Wetherby K.D."/>
            <person name="Young A."/>
            <person name="Green E.D."/>
        </authorList>
    </citation>
    <scope>NUCLEOTIDE SEQUENCE [LARGE SCALE GENOMIC DNA]</scope>
</reference>